<proteinExistence type="inferred from homology"/>
<gene>
    <name evidence="1" type="primary">rpmI</name>
    <name type="ordered locus">CKL_3195</name>
</gene>
<keyword id="KW-1185">Reference proteome</keyword>
<keyword id="KW-0687">Ribonucleoprotein</keyword>
<keyword id="KW-0689">Ribosomal protein</keyword>
<sequence>MPKMKTKKSVAKRFKLTGTGKLKRAQAFKSHILTKKSRKTKRNLRKTAYVSETQEKVMKKLLPYV</sequence>
<dbReference type="EMBL" id="CP000673">
    <property type="protein sequence ID" value="EDK35203.1"/>
    <property type="molecule type" value="Genomic_DNA"/>
</dbReference>
<dbReference type="RefSeq" id="WP_012103540.1">
    <property type="nucleotide sequence ID" value="NC_009706.1"/>
</dbReference>
<dbReference type="SMR" id="A5N257"/>
<dbReference type="STRING" id="431943.CKL_3195"/>
<dbReference type="KEGG" id="ckl:CKL_3195"/>
<dbReference type="eggNOG" id="COG0291">
    <property type="taxonomic scope" value="Bacteria"/>
</dbReference>
<dbReference type="HOGENOM" id="CLU_169643_1_1_9"/>
<dbReference type="Proteomes" id="UP000002411">
    <property type="component" value="Chromosome"/>
</dbReference>
<dbReference type="GO" id="GO:0022625">
    <property type="term" value="C:cytosolic large ribosomal subunit"/>
    <property type="evidence" value="ECO:0007669"/>
    <property type="project" value="TreeGrafter"/>
</dbReference>
<dbReference type="GO" id="GO:0003735">
    <property type="term" value="F:structural constituent of ribosome"/>
    <property type="evidence" value="ECO:0007669"/>
    <property type="project" value="InterPro"/>
</dbReference>
<dbReference type="GO" id="GO:0006412">
    <property type="term" value="P:translation"/>
    <property type="evidence" value="ECO:0007669"/>
    <property type="project" value="UniProtKB-UniRule"/>
</dbReference>
<dbReference type="FunFam" id="4.10.410.60:FF:000001">
    <property type="entry name" value="50S ribosomal protein L35"/>
    <property type="match status" value="1"/>
</dbReference>
<dbReference type="Gene3D" id="4.10.410.60">
    <property type="match status" value="1"/>
</dbReference>
<dbReference type="HAMAP" id="MF_00514">
    <property type="entry name" value="Ribosomal_bL35"/>
    <property type="match status" value="1"/>
</dbReference>
<dbReference type="InterPro" id="IPR001706">
    <property type="entry name" value="Ribosomal_bL35"/>
</dbReference>
<dbReference type="InterPro" id="IPR021137">
    <property type="entry name" value="Ribosomal_bL35-like"/>
</dbReference>
<dbReference type="InterPro" id="IPR018265">
    <property type="entry name" value="Ribosomal_bL35_CS"/>
</dbReference>
<dbReference type="InterPro" id="IPR037229">
    <property type="entry name" value="Ribosomal_bL35_sf"/>
</dbReference>
<dbReference type="NCBIfam" id="TIGR00001">
    <property type="entry name" value="rpmI_bact"/>
    <property type="match status" value="1"/>
</dbReference>
<dbReference type="PANTHER" id="PTHR33343">
    <property type="entry name" value="54S RIBOSOMAL PROTEIN BL35M"/>
    <property type="match status" value="1"/>
</dbReference>
<dbReference type="PANTHER" id="PTHR33343:SF1">
    <property type="entry name" value="LARGE RIBOSOMAL SUBUNIT PROTEIN BL35M"/>
    <property type="match status" value="1"/>
</dbReference>
<dbReference type="Pfam" id="PF01632">
    <property type="entry name" value="Ribosomal_L35p"/>
    <property type="match status" value="1"/>
</dbReference>
<dbReference type="PRINTS" id="PR00064">
    <property type="entry name" value="RIBOSOMALL35"/>
</dbReference>
<dbReference type="SUPFAM" id="SSF143034">
    <property type="entry name" value="L35p-like"/>
    <property type="match status" value="1"/>
</dbReference>
<dbReference type="PROSITE" id="PS00936">
    <property type="entry name" value="RIBOSOMAL_L35"/>
    <property type="match status" value="1"/>
</dbReference>
<evidence type="ECO:0000255" key="1">
    <source>
        <dbReference type="HAMAP-Rule" id="MF_00514"/>
    </source>
</evidence>
<evidence type="ECO:0000305" key="2"/>
<organism>
    <name type="scientific">Clostridium kluyveri (strain ATCC 8527 / DSM 555 / NBRC 12016 / NCIMB 10680 / K1)</name>
    <dbReference type="NCBI Taxonomy" id="431943"/>
    <lineage>
        <taxon>Bacteria</taxon>
        <taxon>Bacillati</taxon>
        <taxon>Bacillota</taxon>
        <taxon>Clostridia</taxon>
        <taxon>Eubacteriales</taxon>
        <taxon>Clostridiaceae</taxon>
        <taxon>Clostridium</taxon>
    </lineage>
</organism>
<accession>A5N257</accession>
<comment type="similarity">
    <text evidence="1">Belongs to the bacterial ribosomal protein bL35 family.</text>
</comment>
<protein>
    <recommendedName>
        <fullName evidence="1">Large ribosomal subunit protein bL35</fullName>
    </recommendedName>
    <alternativeName>
        <fullName evidence="2">50S ribosomal protein L35</fullName>
    </alternativeName>
</protein>
<reference key="1">
    <citation type="journal article" date="2008" name="Proc. Natl. Acad. Sci. U.S.A.">
        <title>The genome of Clostridium kluyveri, a strict anaerobe with unique metabolic features.</title>
        <authorList>
            <person name="Seedorf H."/>
            <person name="Fricke W.F."/>
            <person name="Veith B."/>
            <person name="Brueggemann H."/>
            <person name="Liesegang H."/>
            <person name="Strittmatter A."/>
            <person name="Miethke M."/>
            <person name="Buckel W."/>
            <person name="Hinderberger J."/>
            <person name="Li F."/>
            <person name="Hagemeier C."/>
            <person name="Thauer R.K."/>
            <person name="Gottschalk G."/>
        </authorList>
    </citation>
    <scope>NUCLEOTIDE SEQUENCE [LARGE SCALE GENOMIC DNA]</scope>
    <source>
        <strain>ATCC 8527 / DSM 555 / NBRC 12016 / NCIMB 10680 / K1</strain>
    </source>
</reference>
<feature type="chain" id="PRO_1000081602" description="Large ribosomal subunit protein bL35">
    <location>
        <begin position="1"/>
        <end position="65"/>
    </location>
</feature>
<name>RL35_CLOK5</name>